<organism>
    <name type="scientific">Homo sapiens</name>
    <name type="common">Human</name>
    <dbReference type="NCBI Taxonomy" id="9606"/>
    <lineage>
        <taxon>Eukaryota</taxon>
        <taxon>Metazoa</taxon>
        <taxon>Chordata</taxon>
        <taxon>Craniata</taxon>
        <taxon>Vertebrata</taxon>
        <taxon>Euteleostomi</taxon>
        <taxon>Mammalia</taxon>
        <taxon>Eutheria</taxon>
        <taxon>Euarchontoglires</taxon>
        <taxon>Primates</taxon>
        <taxon>Haplorrhini</taxon>
        <taxon>Catarrhini</taxon>
        <taxon>Hominidae</taxon>
        <taxon>Homo</taxon>
    </lineage>
</organism>
<reference key="1">
    <citation type="journal article" date="2005" name="J. Neurosci. Res.">
        <title>Neudesin, a novel secreted protein with a unique primary structure and neurotrophic activity.</title>
        <authorList>
            <person name="Kimura I."/>
            <person name="Yoshioka M."/>
            <person name="Konishi M."/>
            <person name="Miyake A."/>
            <person name="Itoh N."/>
        </authorList>
    </citation>
    <scope>NUCLEOTIDE SEQUENCE [MRNA]</scope>
    <source>
        <tissue>Brain</tissue>
    </source>
</reference>
<reference key="2">
    <citation type="submission" date="1999-07" db="EMBL/GenBank/DDBJ databases">
        <title>Identification of a secreted protein of unknown function.</title>
        <authorList>
            <person name="Rasheed Z.A."/>
            <person name="Haluska P."/>
            <person name="Saleem A."/>
            <person name="Rubin E.H."/>
        </authorList>
    </citation>
    <scope>NUCLEOTIDE SEQUENCE [MRNA]</scope>
</reference>
<reference key="3">
    <citation type="submission" date="2004-09" db="EMBL/GenBank/DDBJ databases">
        <title>Identification of a cell growth-inhibiting gene.</title>
        <authorList>
            <person name="Kim J.W."/>
        </authorList>
    </citation>
    <scope>NUCLEOTIDE SEQUENCE [LARGE SCALE MRNA]</scope>
</reference>
<reference key="4">
    <citation type="submission" date="2005-04" db="EMBL/GenBank/DDBJ databases">
        <authorList>
            <person name="Suzuki Y."/>
            <person name="Sugano S."/>
            <person name="Totoki Y."/>
            <person name="Toyoda A."/>
            <person name="Takeda T."/>
            <person name="Sakaki Y."/>
            <person name="Tanaka A."/>
            <person name="Yokoyama S."/>
        </authorList>
    </citation>
    <scope>NUCLEOTIDE SEQUENCE [LARGE SCALE MRNA]</scope>
    <source>
        <tissue>Gastric carcinoma</tissue>
    </source>
</reference>
<reference key="5">
    <citation type="submission" date="2005-09" db="EMBL/GenBank/DDBJ databases">
        <authorList>
            <person name="Mural R.J."/>
            <person name="Istrail S."/>
            <person name="Sutton G.G."/>
            <person name="Florea L."/>
            <person name="Halpern A.L."/>
            <person name="Mobarry C.M."/>
            <person name="Lippert R."/>
            <person name="Walenz B."/>
            <person name="Shatkay H."/>
            <person name="Dew I."/>
            <person name="Miller J.R."/>
            <person name="Flanigan M.J."/>
            <person name="Edwards N.J."/>
            <person name="Bolanos R."/>
            <person name="Fasulo D."/>
            <person name="Halldorsson B.V."/>
            <person name="Hannenhalli S."/>
            <person name="Turner R."/>
            <person name="Yooseph S."/>
            <person name="Lu F."/>
            <person name="Nusskern D.R."/>
            <person name="Shue B.C."/>
            <person name="Zheng X.H."/>
            <person name="Zhong F."/>
            <person name="Delcher A.L."/>
            <person name="Huson D.H."/>
            <person name="Kravitz S.A."/>
            <person name="Mouchard L."/>
            <person name="Reinert K."/>
            <person name="Remington K.A."/>
            <person name="Clark A.G."/>
            <person name="Waterman M.S."/>
            <person name="Eichler E.E."/>
            <person name="Adams M.D."/>
            <person name="Hunkapiller M.W."/>
            <person name="Myers E.W."/>
            <person name="Venter J.C."/>
        </authorList>
    </citation>
    <scope>NUCLEOTIDE SEQUENCE [LARGE SCALE GENOMIC DNA]</scope>
</reference>
<reference key="6">
    <citation type="journal article" date="2004" name="Genome Res.">
        <title>The status, quality, and expansion of the NIH full-length cDNA project: the Mammalian Gene Collection (MGC).</title>
        <authorList>
            <consortium name="The MGC Project Team"/>
        </authorList>
    </citation>
    <scope>NUCLEOTIDE SEQUENCE [LARGE SCALE MRNA]</scope>
    <source>
        <tissue>Uterus</tissue>
    </source>
</reference>
<reference key="7">
    <citation type="journal article" date="1998" name="Oncogene">
        <title>Up-regulation of CIR1/CROC1 expression upon cell immortalization and in tumor-derived human cell lines.</title>
        <authorList>
            <person name="Ma L."/>
            <person name="Broomfield S."/>
            <person name="Lavery C."/>
            <person name="Lin S.L."/>
            <person name="Xiao W."/>
            <person name="Bacchetti S."/>
        </authorList>
    </citation>
    <scope>INDUCTION</scope>
</reference>
<reference key="8">
    <citation type="journal article" date="2006" name="Electrophoresis">
        <title>Breast cancer proteomics by laser capture microdissection, sample pooling, 54-cm IPG IEF, and differential iodine radioisotope detection.</title>
        <authorList>
            <person name="Neubauer H."/>
            <person name="Clare S.E."/>
            <person name="Kurek R."/>
            <person name="Fehm T."/>
            <person name="Wallwiener D."/>
            <person name="Sotlar K."/>
            <person name="Nordheim A."/>
            <person name="Wozny W."/>
            <person name="Schwall G.P."/>
            <person name="Poznanovic S."/>
            <person name="Sastri C."/>
            <person name="Hunzinger C."/>
            <person name="Stegmann W."/>
            <person name="Schrattenholz A."/>
            <person name="Cahill M.A."/>
        </authorList>
    </citation>
    <scope>INDUCTION</scope>
</reference>
<reference key="9">
    <citation type="journal article" date="2009" name="Science">
        <title>Lysine acetylation targets protein complexes and co-regulates major cellular functions.</title>
        <authorList>
            <person name="Choudhary C."/>
            <person name="Kumar C."/>
            <person name="Gnad F."/>
            <person name="Nielsen M.L."/>
            <person name="Rehman M."/>
            <person name="Walther T.C."/>
            <person name="Olsen J.V."/>
            <person name="Mann M."/>
        </authorList>
    </citation>
    <scope>ACETYLATION [LARGE SCALE ANALYSIS] AT LYS-136</scope>
    <scope>IDENTIFICATION BY MASS SPECTROMETRY [LARGE SCALE ANALYSIS]</scope>
</reference>
<reference key="10">
    <citation type="journal article" date="2011" name="BMC Syst. Biol.">
        <title>Initial characterization of the human central proteome.</title>
        <authorList>
            <person name="Burkard T.R."/>
            <person name="Planyavsky M."/>
            <person name="Kaupe I."/>
            <person name="Breitwieser F.P."/>
            <person name="Buerckstuemmer T."/>
            <person name="Bennett K.L."/>
            <person name="Superti-Furga G."/>
            <person name="Colinge J."/>
        </authorList>
    </citation>
    <scope>IDENTIFICATION BY MASS SPECTROMETRY [LARGE SCALE ANALYSIS]</scope>
</reference>
<reference key="11">
    <citation type="journal article" date="2012" name="BMC Cancer">
        <title>The functional and structural characterization of a novel oncogene GIG47 involved in the breast tumorigenesis.</title>
        <authorList>
            <person name="Han K.H."/>
            <person name="Lee S.H."/>
            <person name="Ha S.A."/>
            <person name="Kim H.K."/>
            <person name="Lee C."/>
            <person name="Kim D.H."/>
            <person name="Gong K.H."/>
            <person name="Yoo J."/>
            <person name="Kim S."/>
            <person name="Kim J.W."/>
        </authorList>
    </citation>
    <scope>TISSUE SPECIFICITY</scope>
    <scope>STRUCTURE BY NMR</scope>
</reference>
<reference key="12">
    <citation type="journal article" date="2013" name="J. Neuroendocrinol.">
        <title>Nonclassical progesterone signalling molecules in the nervous system.</title>
        <authorList>
            <person name="Petersen S.L."/>
            <person name="Intlekofer K.A."/>
            <person name="Moura-Conlon P.J."/>
            <person name="Brewer D.N."/>
            <person name="Del Pino Sans J."/>
            <person name="Lopez J.A."/>
        </authorList>
    </citation>
    <scope>MISCELLANEOUS</scope>
    <scope>REVIEW</scope>
</reference>
<reference key="13">
    <citation type="journal article" date="2014" name="J. Proteomics">
        <title>An enzyme assisted RP-RPLC approach for in-depth analysis of human liver phosphoproteome.</title>
        <authorList>
            <person name="Bian Y."/>
            <person name="Song C."/>
            <person name="Cheng K."/>
            <person name="Dong M."/>
            <person name="Wang F."/>
            <person name="Huang J."/>
            <person name="Sun D."/>
            <person name="Wang L."/>
            <person name="Ye M."/>
            <person name="Zou H."/>
        </authorList>
    </citation>
    <scope>IDENTIFICATION BY MASS SPECTROMETRY [LARGE SCALE ANALYSIS]</scope>
    <source>
        <tissue>Liver</tissue>
    </source>
</reference>
<reference key="14">
    <citation type="journal article" date="2015" name="Proteomics">
        <title>N-terminome analysis of the human mitochondrial proteome.</title>
        <authorList>
            <person name="Vaca Jacome A.S."/>
            <person name="Rabilloud T."/>
            <person name="Schaeffer-Reiss C."/>
            <person name="Rompais M."/>
            <person name="Ayoub D."/>
            <person name="Lane L."/>
            <person name="Bairoch A."/>
            <person name="Van Dorsselaer A."/>
            <person name="Carapito C."/>
        </authorList>
    </citation>
    <scope>IDENTIFICATION BY MASS SPECTROMETRY [LARGE SCALE ANALYSIS]</scope>
</reference>
<reference key="15">
    <citation type="journal article" date="2017" name="Front. Pharmacol.">
        <title>Membrane associated progesterone receptors: promiscuous proteins with pleiotropic functions - focus on interactions with cytochromes P450.</title>
        <authorList>
            <person name="Ryu C.S."/>
            <person name="Klein K."/>
            <person name="Zanger U.M."/>
        </authorList>
    </citation>
    <scope>REVIEW</scope>
    <scope>MISCELLANEOUS</scope>
</reference>
<reference key="16">
    <citation type="journal article" date="2019" name="IScience">
        <title>Rewiring of the Human Mitochondrial Interactome during Neuronal Reprogramming Reveals Regulators of the Respirasome and Neurogenesis.</title>
        <authorList>
            <person name="Moutaoufik M.T."/>
            <person name="Malty R."/>
            <person name="Amin S."/>
            <person name="Zhang Q."/>
            <person name="Phanse S."/>
            <person name="Gagarinova A."/>
            <person name="Zilocchi M."/>
            <person name="Hoell L."/>
            <person name="Minic Z."/>
            <person name="Gagarinova M."/>
            <person name="Aoki H."/>
            <person name="Stockwell J."/>
            <person name="Jessulat M."/>
            <person name="Goebels F."/>
            <person name="Broderick K."/>
            <person name="Scott N.E."/>
            <person name="Vlasblom J."/>
            <person name="Musso G."/>
            <person name="Prasad B."/>
            <person name="Lamantea E."/>
            <person name="Garavaglia B."/>
            <person name="Rajput A."/>
            <person name="Murayama K."/>
            <person name="Okazaki Y."/>
            <person name="Foster L.J."/>
            <person name="Bader G.D."/>
            <person name="Cayabyab F.S."/>
            <person name="Babu M."/>
        </authorList>
    </citation>
    <scope>IDENTIFICATION BY MASS SPECTROMETRY</scope>
    <scope>FUNCTION</scope>
    <scope>INTERACTION WITH PINK1 AND PARK7</scope>
    <scope>SUBCELLULAR LOCATION</scope>
</reference>
<sequence length="172" mass="18856">MVGPAPRRRLRPLAALALVLALAPGLPTARAGQTPRPAERGPPVRLFTEEELARYGGEEEDQPIYLAVKGVVFDVTSGKEFYGRGAPYNALTGKDSTRGVAKMSLDPADLTHDTTGLTAKELEALDEVFTKVYKAKYPIVGYTARRILNEDGSPNLDFKPEDQPHFDIKDEF</sequence>
<evidence type="ECO:0000250" key="1"/>
<evidence type="ECO:0000250" key="2">
    <source>
        <dbReference type="UniProtKB" id="Q9CQ45"/>
    </source>
</evidence>
<evidence type="ECO:0000255" key="3"/>
<evidence type="ECO:0000256" key="4">
    <source>
        <dbReference type="SAM" id="MobiDB-lite"/>
    </source>
</evidence>
<evidence type="ECO:0000269" key="5">
    <source>
    </source>
</evidence>
<evidence type="ECO:0000269" key="6">
    <source>
    </source>
</evidence>
<evidence type="ECO:0000269" key="7">
    <source>
    </source>
</evidence>
<evidence type="ECO:0000269" key="8">
    <source>
    </source>
</evidence>
<evidence type="ECO:0000303" key="9">
    <source>
    </source>
</evidence>
<evidence type="ECO:0000303" key="10">
    <source>
    </source>
</evidence>
<evidence type="ECO:0000303" key="11">
    <source>
    </source>
</evidence>
<evidence type="ECO:0000305" key="12"/>
<evidence type="ECO:0000312" key="13">
    <source>
        <dbReference type="HGNC" id="HGNC:30384"/>
    </source>
</evidence>
<evidence type="ECO:0007744" key="14">
    <source>
    </source>
</evidence>
<keyword id="KW-0007">Acetylation</keyword>
<keyword id="KW-0256">Endoplasmic reticulum</keyword>
<keyword id="KW-0349">Heme</keyword>
<keyword id="KW-0408">Iron</keyword>
<keyword id="KW-0479">Metal-binding</keyword>
<keyword id="KW-0496">Mitochondrion</keyword>
<keyword id="KW-1267">Proteomics identification</keyword>
<keyword id="KW-1185">Reference proteome</keyword>
<keyword id="KW-0964">Secreted</keyword>
<keyword id="KW-0732">Signal</keyword>
<gene>
    <name evidence="13" type="primary">NENF</name>
    <name type="synonym">CIR2</name>
    <name type="synonym">SPUF</name>
</gene>
<protein>
    <recommendedName>
        <fullName>Neudesin</fullName>
    </recommendedName>
    <alternativeName>
        <fullName>Cell immortalization-related protein 2</fullName>
    </alternativeName>
    <alternativeName>
        <fullName>Neuron-derived neurotrophic factor</fullName>
    </alternativeName>
    <alternativeName>
        <fullName evidence="9">Protein GIG47</fullName>
    </alternativeName>
    <alternativeName>
        <fullName>Secreted protein of unknown function</fullName>
        <shortName>SPUF protein</shortName>
    </alternativeName>
</protein>
<name>NENF_HUMAN</name>
<dbReference type="EMBL" id="AB126219">
    <property type="protein sequence ID" value="BAD72063.1"/>
    <property type="molecule type" value="mRNA"/>
</dbReference>
<dbReference type="EMBL" id="AF173937">
    <property type="protein sequence ID" value="AAD51419.1"/>
    <property type="molecule type" value="mRNA"/>
</dbReference>
<dbReference type="EMBL" id="AY762102">
    <property type="protein sequence ID" value="AAX07829.1"/>
    <property type="molecule type" value="mRNA"/>
</dbReference>
<dbReference type="EMBL" id="AK223135">
    <property type="protein sequence ID" value="BAD96855.1"/>
    <property type="molecule type" value="mRNA"/>
</dbReference>
<dbReference type="EMBL" id="CH471100">
    <property type="protein sequence ID" value="EAW93389.1"/>
    <property type="molecule type" value="Genomic_DNA"/>
</dbReference>
<dbReference type="EMBL" id="BC008823">
    <property type="protein sequence ID" value="AAH08823.1"/>
    <property type="molecule type" value="mRNA"/>
</dbReference>
<dbReference type="CCDS" id="CCDS1505.1"/>
<dbReference type="RefSeq" id="NP_037481.1">
    <property type="nucleotide sequence ID" value="NM_013349.5"/>
</dbReference>
<dbReference type="SMR" id="Q9UMX5"/>
<dbReference type="BioGRID" id="118976">
    <property type="interactions" value="97"/>
</dbReference>
<dbReference type="FunCoup" id="Q9UMX5">
    <property type="interactions" value="338"/>
</dbReference>
<dbReference type="IntAct" id="Q9UMX5">
    <property type="interactions" value="8"/>
</dbReference>
<dbReference type="STRING" id="9606.ENSP00000355955"/>
<dbReference type="GlyGen" id="Q9UMX5">
    <property type="glycosylation" value="5 sites, 1 O-linked glycan (5 sites)"/>
</dbReference>
<dbReference type="iPTMnet" id="Q9UMX5"/>
<dbReference type="MetOSite" id="Q9UMX5"/>
<dbReference type="PhosphoSitePlus" id="Q9UMX5"/>
<dbReference type="BioMuta" id="NENF"/>
<dbReference type="DMDM" id="46577571"/>
<dbReference type="jPOST" id="Q9UMX5"/>
<dbReference type="MassIVE" id="Q9UMX5"/>
<dbReference type="PaxDb" id="9606-ENSP00000355955"/>
<dbReference type="PeptideAtlas" id="Q9UMX5"/>
<dbReference type="ProteomicsDB" id="85222"/>
<dbReference type="Pumba" id="Q9UMX5"/>
<dbReference type="TopDownProteomics" id="Q9UMX5"/>
<dbReference type="Antibodypedia" id="20714">
    <property type="antibodies" value="154 antibodies from 31 providers"/>
</dbReference>
<dbReference type="DNASU" id="29937"/>
<dbReference type="Ensembl" id="ENST00000366988.5">
    <property type="protein sequence ID" value="ENSP00000355955.3"/>
    <property type="gene ID" value="ENSG00000117691.10"/>
</dbReference>
<dbReference type="GeneID" id="29937"/>
<dbReference type="KEGG" id="hsa:29937"/>
<dbReference type="MANE-Select" id="ENST00000366988.5">
    <property type="protein sequence ID" value="ENSP00000355955.3"/>
    <property type="RefSeq nucleotide sequence ID" value="NM_013349.5"/>
    <property type="RefSeq protein sequence ID" value="NP_037481.1"/>
</dbReference>
<dbReference type="UCSC" id="uc001hjd.3">
    <property type="organism name" value="human"/>
</dbReference>
<dbReference type="AGR" id="HGNC:30384"/>
<dbReference type="CTD" id="29937"/>
<dbReference type="DisGeNET" id="29937"/>
<dbReference type="GeneCards" id="NENF"/>
<dbReference type="HGNC" id="HGNC:30384">
    <property type="gene designation" value="NENF"/>
</dbReference>
<dbReference type="HPA" id="ENSG00000117691">
    <property type="expression patterns" value="Low tissue specificity"/>
</dbReference>
<dbReference type="MIM" id="611874">
    <property type="type" value="gene"/>
</dbReference>
<dbReference type="neXtProt" id="NX_Q9UMX5"/>
<dbReference type="OpenTargets" id="ENSG00000117691"/>
<dbReference type="PharmGKB" id="PA142671266"/>
<dbReference type="VEuPathDB" id="HostDB:ENSG00000117691"/>
<dbReference type="eggNOG" id="KOG1110">
    <property type="taxonomic scope" value="Eukaryota"/>
</dbReference>
<dbReference type="GeneTree" id="ENSGT00940000162504"/>
<dbReference type="HOGENOM" id="CLU_134788_0_0_1"/>
<dbReference type="InParanoid" id="Q9UMX5"/>
<dbReference type="OMA" id="VGYTAQR"/>
<dbReference type="OrthoDB" id="547796at2759"/>
<dbReference type="PAN-GO" id="Q9UMX5">
    <property type="GO annotations" value="2 GO annotations based on evolutionary models"/>
</dbReference>
<dbReference type="PhylomeDB" id="Q9UMX5"/>
<dbReference type="TreeFam" id="TF332131"/>
<dbReference type="PathwayCommons" id="Q9UMX5"/>
<dbReference type="SignaLink" id="Q9UMX5"/>
<dbReference type="BioGRID-ORCS" id="29937">
    <property type="hits" value="15 hits in 1162 CRISPR screens"/>
</dbReference>
<dbReference type="ChiTaRS" id="NENF">
    <property type="organism name" value="human"/>
</dbReference>
<dbReference type="GenomeRNAi" id="29937"/>
<dbReference type="Pharos" id="Q9UMX5">
    <property type="development level" value="Tbio"/>
</dbReference>
<dbReference type="PRO" id="PR:Q9UMX5"/>
<dbReference type="Proteomes" id="UP000005640">
    <property type="component" value="Chromosome 1"/>
</dbReference>
<dbReference type="RNAct" id="Q9UMX5">
    <property type="molecule type" value="protein"/>
</dbReference>
<dbReference type="Bgee" id="ENSG00000117691">
    <property type="expression patterns" value="Expressed in tendon of biceps brachii and 200 other cell types or tissues"/>
</dbReference>
<dbReference type="GO" id="GO:0012505">
    <property type="term" value="C:endomembrane system"/>
    <property type="evidence" value="ECO:0000318"/>
    <property type="project" value="GO_Central"/>
</dbReference>
<dbReference type="GO" id="GO:0005783">
    <property type="term" value="C:endoplasmic reticulum"/>
    <property type="evidence" value="ECO:0000314"/>
    <property type="project" value="UniProtKB"/>
</dbReference>
<dbReference type="GO" id="GO:0005615">
    <property type="term" value="C:extracellular space"/>
    <property type="evidence" value="ECO:0000314"/>
    <property type="project" value="UniProtKB"/>
</dbReference>
<dbReference type="GO" id="GO:0016020">
    <property type="term" value="C:membrane"/>
    <property type="evidence" value="ECO:0000318"/>
    <property type="project" value="GO_Central"/>
</dbReference>
<dbReference type="GO" id="GO:0005739">
    <property type="term" value="C:mitochondrion"/>
    <property type="evidence" value="ECO:0000314"/>
    <property type="project" value="UniProtKB"/>
</dbReference>
<dbReference type="GO" id="GO:0008083">
    <property type="term" value="F:growth factor activity"/>
    <property type="evidence" value="ECO:0007669"/>
    <property type="project" value="Ensembl"/>
</dbReference>
<dbReference type="GO" id="GO:0046872">
    <property type="term" value="F:metal ion binding"/>
    <property type="evidence" value="ECO:0007669"/>
    <property type="project" value="UniProtKB-KW"/>
</dbReference>
<dbReference type="GO" id="GO:0000165">
    <property type="term" value="P:MAPK cascade"/>
    <property type="evidence" value="ECO:0007669"/>
    <property type="project" value="Ensembl"/>
</dbReference>
<dbReference type="GO" id="GO:0032099">
    <property type="term" value="P:negative regulation of appetite"/>
    <property type="evidence" value="ECO:0000250"/>
    <property type="project" value="UniProtKB"/>
</dbReference>
<dbReference type="GO" id="GO:0043410">
    <property type="term" value="P:positive regulation of MAPK cascade"/>
    <property type="evidence" value="ECO:0007669"/>
    <property type="project" value="Ensembl"/>
</dbReference>
<dbReference type="FunFam" id="3.10.120.10:FF:000013">
    <property type="entry name" value="Neudesin"/>
    <property type="match status" value="1"/>
</dbReference>
<dbReference type="Gene3D" id="3.10.120.10">
    <property type="entry name" value="Cytochrome b5-like heme/steroid binding domain"/>
    <property type="match status" value="1"/>
</dbReference>
<dbReference type="InterPro" id="IPR001199">
    <property type="entry name" value="Cyt_B5-like_heme/steroid-bd"/>
</dbReference>
<dbReference type="InterPro" id="IPR036400">
    <property type="entry name" value="Cyt_B5-like_heme/steroid_sf"/>
</dbReference>
<dbReference type="InterPro" id="IPR050577">
    <property type="entry name" value="MAPR/NEUFC/NENF-like"/>
</dbReference>
<dbReference type="PANTHER" id="PTHR10281">
    <property type="entry name" value="MEMBRANE-ASSOCIATED PROGESTERONE RECEPTOR COMPONENT-RELATED"/>
    <property type="match status" value="1"/>
</dbReference>
<dbReference type="PANTHER" id="PTHR10281:SF72">
    <property type="entry name" value="NEUDESIN"/>
    <property type="match status" value="1"/>
</dbReference>
<dbReference type="Pfam" id="PF00173">
    <property type="entry name" value="Cyt-b5"/>
    <property type="match status" value="1"/>
</dbReference>
<dbReference type="SMART" id="SM01117">
    <property type="entry name" value="Cyt-b5"/>
    <property type="match status" value="1"/>
</dbReference>
<dbReference type="SUPFAM" id="SSF55856">
    <property type="entry name" value="Cytochrome b5-like heme/steroid binding domain"/>
    <property type="match status" value="1"/>
</dbReference>
<comment type="function">
    <text evidence="2 7">Acts as a neurotrophic factor in postnatal mature neurons enhancing neuronal survival (PubMed:31536960). Promotes cell proliferation and neurogenesis in undifferentiated neural progenitor cells at the embryonic stage and inhibits differentiation of astrocytes (By similarity). Its neurotrophic activity is exerted via MAPK1/ERK2, MAPK3/ERK1 and AKT1/AKT pathways (By similarity). Neurotrophic activity is enhanced by binding to heme (By similarity). Also acts as an anorexigenic neurotrophic factor that contributes to energy balance (By similarity).</text>
</comment>
<comment type="subunit">
    <text evidence="7">Interacts with PINK1 and PARK7.</text>
</comment>
<comment type="subcellular location">
    <subcellularLocation>
        <location evidence="7">Secreted</location>
        <location evidence="7">Extracellular space</location>
    </subcellularLocation>
    <subcellularLocation>
        <location evidence="7">Mitochondrion</location>
    </subcellularLocation>
    <subcellularLocation>
        <location evidence="7">Endoplasmic reticulum</location>
    </subcellularLocation>
    <text evidence="7">Localized to mitochondria and endoplasmic reticulum by PINK1 and PARK7.</text>
</comment>
<comment type="tissue specificity">
    <text evidence="6">Ubiquitously expressed with high expression in heart. Over-expressed in various tumors including carcinomas of the uterine cervix, lymphoma, colon, lung, skin and leukemia, as well as carcinoma of the breast.</text>
</comment>
<comment type="induction">
    <text evidence="5 8">Up-regulated in immortal cells. Induced in estrogen receptor positive breast cancer expressing progesterone receptor.</text>
</comment>
<comment type="domain">
    <text evidence="1">The cytochrome b5 heme-binding domain was proven to bind heme, although it lacks the conserved iron-binding His residue at position 82.</text>
</comment>
<comment type="miscellaneous">
    <text evidence="10 11">Non-classical progesterone receptors involved in extranuclear signaling are classified in 2 groups: the class II progestin and adipoQ receptor (PAQR) family (also called mPRs) (PAQR5, PAQR6, PAQR7, PAQR8 and PAQR9) and the b5-like heme/steroid-binding protein family (also called MAPRs) (PGRMC1, PGRMC2, NENF and CYB5D2).</text>
</comment>
<comment type="similarity">
    <text evidence="12">Belongs to the cytochrome b5 family. MAPR subfamily.</text>
</comment>
<feature type="signal peptide" evidence="3">
    <location>
        <begin position="1"/>
        <end position="31"/>
    </location>
</feature>
<feature type="chain" id="PRO_0000018598" description="Neudesin">
    <location>
        <begin position="32"/>
        <end position="172"/>
    </location>
</feature>
<feature type="domain" description="Cytochrome b5 heme-binding">
    <location>
        <begin position="44"/>
        <end position="129"/>
    </location>
</feature>
<feature type="region of interest" description="Disordered" evidence="4">
    <location>
        <begin position="151"/>
        <end position="172"/>
    </location>
</feature>
<feature type="compositionally biased region" description="Basic and acidic residues" evidence="4">
    <location>
        <begin position="158"/>
        <end position="172"/>
    </location>
</feature>
<feature type="modified residue" description="N6-acetyllysine" evidence="14">
    <location>
        <position position="136"/>
    </location>
</feature>
<feature type="sequence conflict" description="In Ref. 4; BAD96855." evidence="12" ref="4">
    <original>D</original>
    <variation>E</variation>
    <location>
        <position position="74"/>
    </location>
</feature>
<accession>Q9UMX5</accession>
<accession>A1KYQ8</accession>
<accession>Q53FZ6</accession>
<accession>Q5TM90</accession>
<proteinExistence type="evidence at protein level"/>